<feature type="chain" id="PRO_0000205688" description="Tropomyosin">
    <location>
        <begin position="1"/>
        <end position="283"/>
    </location>
</feature>
<feature type="coiled-coil region" evidence="1">
    <location>
        <begin position="1"/>
        <end position="283"/>
    </location>
</feature>
<dbReference type="PIR" id="A60364">
    <property type="entry name" value="A60364"/>
</dbReference>
<dbReference type="SMR" id="P31816"/>
<dbReference type="Allergome" id="4200">
    <property type="allergen name" value="Loc m 7"/>
</dbReference>
<dbReference type="Allergome" id="4201">
    <property type="allergen name" value="Loc m 7.0101"/>
</dbReference>
<dbReference type="FunFam" id="1.20.5.170:FF:000005">
    <property type="entry name" value="Tropomyosin alpha-1 chain"/>
    <property type="match status" value="1"/>
</dbReference>
<dbReference type="FunFam" id="1.20.5.170:FF:000001">
    <property type="entry name" value="Tropomyosin alpha-1 chain isoform 1"/>
    <property type="match status" value="1"/>
</dbReference>
<dbReference type="FunFam" id="1.20.5.340:FF:000001">
    <property type="entry name" value="Tropomyosin alpha-1 chain isoform 2"/>
    <property type="match status" value="1"/>
</dbReference>
<dbReference type="Gene3D" id="1.20.5.170">
    <property type="match status" value="2"/>
</dbReference>
<dbReference type="Gene3D" id="1.20.5.340">
    <property type="match status" value="1"/>
</dbReference>
<dbReference type="InterPro" id="IPR000533">
    <property type="entry name" value="Tropomyosin"/>
</dbReference>
<dbReference type="PANTHER" id="PTHR19269">
    <property type="entry name" value="TROPOMYOSIN"/>
    <property type="match status" value="1"/>
</dbReference>
<dbReference type="Pfam" id="PF00261">
    <property type="entry name" value="Tropomyosin"/>
    <property type="match status" value="1"/>
</dbReference>
<dbReference type="PRINTS" id="PR00194">
    <property type="entry name" value="TROPOMYOSIN"/>
</dbReference>
<dbReference type="SUPFAM" id="SSF57997">
    <property type="entry name" value="Tropomyosin"/>
    <property type="match status" value="1"/>
</dbReference>
<dbReference type="PROSITE" id="PS00326">
    <property type="entry name" value="TROPOMYOSIN"/>
    <property type="match status" value="1"/>
</dbReference>
<proteinExistence type="inferred from homology"/>
<name>TPM_LOCMI</name>
<protein>
    <recommendedName>
        <fullName>Tropomyosin</fullName>
    </recommendedName>
</protein>
<evidence type="ECO:0000250" key="1"/>
<evidence type="ECO:0000305" key="2"/>
<reference key="1">
    <citation type="journal article" date="1990" name="Insect Biochem.">
        <title>Cloning, sequencing and expression of locust tropomyosin.</title>
        <authorList>
            <person name="Krieger J."/>
            <person name="Raming K."/>
            <person name="Knipper M."/>
            <person name="Grau M."/>
            <person name="Mertens S."/>
            <person name="Breer H."/>
        </authorList>
    </citation>
    <scope>NUCLEOTIDE SEQUENCE</scope>
</reference>
<keyword id="KW-0175">Coiled coil</keyword>
<keyword id="KW-0677">Repeat</keyword>
<accession>P31816</accession>
<organism>
    <name type="scientific">Locusta migratoria</name>
    <name type="common">Migratory locust</name>
    <dbReference type="NCBI Taxonomy" id="7004"/>
    <lineage>
        <taxon>Eukaryota</taxon>
        <taxon>Metazoa</taxon>
        <taxon>Ecdysozoa</taxon>
        <taxon>Arthropoda</taxon>
        <taxon>Hexapoda</taxon>
        <taxon>Insecta</taxon>
        <taxon>Pterygota</taxon>
        <taxon>Neoptera</taxon>
        <taxon>Polyneoptera</taxon>
        <taxon>Orthoptera</taxon>
        <taxon>Caelifera</taxon>
        <taxon>Acrididea</taxon>
        <taxon>Acridomorpha</taxon>
        <taxon>Acridoidea</taxon>
        <taxon>Acrididae</taxon>
        <taxon>Oedipodinae</taxon>
        <taxon>Locusta</taxon>
    </lineage>
</organism>
<sequence length="283" mass="32439">MDAIKKKMQAMKLEKDNALDRALLCEQQARDANLRAEKAEEEARALQKKIQTIENDLDQTQESLGQVMAKLEEKEKALQNAESEVAALNRRIQLLEEDLERSEERLATATAKLAEASQAADESERARKILENRSLADEERMDALENQLKEARFLAEEADKKYDEVARKLAMVEADLERAEERAEAGESKIVELEEELRVVGNNLKSLEVSEEKANQREEEISNRLRTLTTRLKEAEARAEFAERSVQKLQKEVDRLEDELVIEKEKYKIIGDDLDSAFVELIL</sequence>
<comment type="function">
    <text>Tropomyosin, in association with the troponin complex, plays a central role in the calcium dependent regulation of muscle contraction.</text>
</comment>
<comment type="subunit">
    <text evidence="1">Homodimer.</text>
</comment>
<comment type="domain">
    <text>The molecule is in a coiled coil structure that is formed by 2 polypeptide chains. The sequence exhibits a prominent seven-residues periodicity.</text>
</comment>
<comment type="similarity">
    <text evidence="2">Belongs to the tropomyosin family.</text>
</comment>